<gene>
    <name type="ordered locus">spyM18_2031</name>
</gene>
<protein>
    <recommendedName>
        <fullName>Putative zinc metalloprotease spyM18_2031</fullName>
        <ecNumber>3.4.24.-</ecNumber>
    </recommendedName>
</protein>
<accession>Q8NZB3</accession>
<feature type="chain" id="PRO_0000088471" description="Putative zinc metalloprotease spyM18_2031">
    <location>
        <begin position="1"/>
        <end position="419"/>
    </location>
</feature>
<feature type="transmembrane region" description="Helical" evidence="1">
    <location>
        <begin position="169"/>
        <end position="191"/>
    </location>
</feature>
<feature type="transmembrane region" description="Helical" evidence="1">
    <location>
        <begin position="301"/>
        <end position="323"/>
    </location>
</feature>
<feature type="transmembrane region" description="Helical" evidence="1">
    <location>
        <begin position="343"/>
        <end position="365"/>
    </location>
</feature>
<feature type="transmembrane region" description="Helical" evidence="1">
    <location>
        <begin position="392"/>
        <end position="411"/>
    </location>
</feature>
<feature type="domain" description="PDZ">
    <location>
        <begin position="175"/>
        <end position="274"/>
    </location>
</feature>
<feature type="active site" evidence="2">
    <location>
        <position position="19"/>
    </location>
</feature>
<feature type="binding site" evidence="2">
    <location>
        <position position="18"/>
    </location>
    <ligand>
        <name>Zn(2+)</name>
        <dbReference type="ChEBI" id="CHEBI:29105"/>
        <note>catalytic</note>
    </ligand>
</feature>
<feature type="binding site" evidence="2">
    <location>
        <position position="22"/>
    </location>
    <ligand>
        <name>Zn(2+)</name>
        <dbReference type="ChEBI" id="CHEBI:29105"/>
        <note>catalytic</note>
    </ligand>
</feature>
<reference key="1">
    <citation type="journal article" date="2002" name="Proc. Natl. Acad. Sci. U.S.A.">
        <title>Genome sequence and comparative microarray analysis of serotype M18 group A Streptococcus strains associated with acute rheumatic fever outbreaks.</title>
        <authorList>
            <person name="Smoot J.C."/>
            <person name="Barbian K.D."/>
            <person name="Van Gompel J.J."/>
            <person name="Smoot L.M."/>
            <person name="Chaussee M.S."/>
            <person name="Sylva G.L."/>
            <person name="Sturdevant D.E."/>
            <person name="Ricklefs S.M."/>
            <person name="Porcella S.F."/>
            <person name="Parkins L.D."/>
            <person name="Beres S.B."/>
            <person name="Campbell D.S."/>
            <person name="Smith T.M."/>
            <person name="Zhang Q."/>
            <person name="Kapur V."/>
            <person name="Daly J.A."/>
            <person name="Veasy L.G."/>
            <person name="Musser J.M."/>
        </authorList>
    </citation>
    <scope>NUCLEOTIDE SEQUENCE [LARGE SCALE GENOMIC DNA]</scope>
    <source>
        <strain>MGAS8232</strain>
    </source>
</reference>
<name>Y2031_STRP8</name>
<keyword id="KW-1003">Cell membrane</keyword>
<keyword id="KW-0378">Hydrolase</keyword>
<keyword id="KW-0472">Membrane</keyword>
<keyword id="KW-0479">Metal-binding</keyword>
<keyword id="KW-0482">Metalloprotease</keyword>
<keyword id="KW-0645">Protease</keyword>
<keyword id="KW-0812">Transmembrane</keyword>
<keyword id="KW-1133">Transmembrane helix</keyword>
<keyword id="KW-0862">Zinc</keyword>
<dbReference type="EC" id="3.4.24.-"/>
<dbReference type="EMBL" id="AE009949">
    <property type="protein sequence ID" value="AAL98508.1"/>
    <property type="molecule type" value="Genomic_DNA"/>
</dbReference>
<dbReference type="SMR" id="Q8NZB3"/>
<dbReference type="KEGG" id="spm:spyM18_2031"/>
<dbReference type="HOGENOM" id="CLU_025778_1_0_9"/>
<dbReference type="GO" id="GO:0005886">
    <property type="term" value="C:plasma membrane"/>
    <property type="evidence" value="ECO:0007669"/>
    <property type="project" value="UniProtKB-SubCell"/>
</dbReference>
<dbReference type="GO" id="GO:0046872">
    <property type="term" value="F:metal ion binding"/>
    <property type="evidence" value="ECO:0007669"/>
    <property type="project" value="UniProtKB-KW"/>
</dbReference>
<dbReference type="GO" id="GO:0004222">
    <property type="term" value="F:metalloendopeptidase activity"/>
    <property type="evidence" value="ECO:0007669"/>
    <property type="project" value="InterPro"/>
</dbReference>
<dbReference type="GO" id="GO:0006508">
    <property type="term" value="P:proteolysis"/>
    <property type="evidence" value="ECO:0007669"/>
    <property type="project" value="UniProtKB-KW"/>
</dbReference>
<dbReference type="CDD" id="cd06163">
    <property type="entry name" value="S2P-M50_PDZ_RseP-like"/>
    <property type="match status" value="1"/>
</dbReference>
<dbReference type="Gene3D" id="2.30.42.10">
    <property type="match status" value="1"/>
</dbReference>
<dbReference type="InterPro" id="IPR001478">
    <property type="entry name" value="PDZ"/>
</dbReference>
<dbReference type="InterPro" id="IPR036034">
    <property type="entry name" value="PDZ_sf"/>
</dbReference>
<dbReference type="InterPro" id="IPR004387">
    <property type="entry name" value="Pept_M50_Zn"/>
</dbReference>
<dbReference type="InterPro" id="IPR008915">
    <property type="entry name" value="Peptidase_M50"/>
</dbReference>
<dbReference type="NCBIfam" id="TIGR00054">
    <property type="entry name" value="RIP metalloprotease RseP"/>
    <property type="match status" value="1"/>
</dbReference>
<dbReference type="PANTHER" id="PTHR42837:SF2">
    <property type="entry name" value="MEMBRANE METALLOPROTEASE ARASP2, CHLOROPLASTIC-RELATED"/>
    <property type="match status" value="1"/>
</dbReference>
<dbReference type="PANTHER" id="PTHR42837">
    <property type="entry name" value="REGULATOR OF SIGMA-E PROTEASE RSEP"/>
    <property type="match status" value="1"/>
</dbReference>
<dbReference type="Pfam" id="PF13180">
    <property type="entry name" value="PDZ_2"/>
    <property type="match status" value="1"/>
</dbReference>
<dbReference type="Pfam" id="PF02163">
    <property type="entry name" value="Peptidase_M50"/>
    <property type="match status" value="1"/>
</dbReference>
<dbReference type="SUPFAM" id="SSF50156">
    <property type="entry name" value="PDZ domain-like"/>
    <property type="match status" value="1"/>
</dbReference>
<dbReference type="PROSITE" id="PS00142">
    <property type="entry name" value="ZINC_PROTEASE"/>
    <property type="match status" value="1"/>
</dbReference>
<organism>
    <name type="scientific">Streptococcus pyogenes serotype M18 (strain MGAS8232)</name>
    <dbReference type="NCBI Taxonomy" id="186103"/>
    <lineage>
        <taxon>Bacteria</taxon>
        <taxon>Bacillati</taxon>
        <taxon>Bacillota</taxon>
        <taxon>Bacilli</taxon>
        <taxon>Lactobacillales</taxon>
        <taxon>Streptococcaceae</taxon>
        <taxon>Streptococcus</taxon>
    </lineage>
</organism>
<evidence type="ECO:0000255" key="1"/>
<evidence type="ECO:0000255" key="2">
    <source>
        <dbReference type="PROSITE-ProRule" id="PRU10095"/>
    </source>
</evidence>
<evidence type="ECO:0000305" key="3"/>
<sequence>MLGIITFIIIFGILVIVHEFGHFYFAKKSGILVREFAIGMGPKIFSHVDQGGTLYTLRMLPLGGYVRMAGWGDDKTEIKTGTPASLTLNEQGFVKRINLSQSKLDPTSLPMHVTGYDLEDQLSITGLVLEETKTYKVAHDATIVEEDGTEIRIAPLDVQYQNASIGGRLITNFAGPMNNFILGIVVFILLVFLQGGMPDFSSNHVRVQENGAAAKAGLRDNDQIVAINGYKVTSWNDLTEAVDLATRDLGPSQTIKVTYKSHQRLKTVAVKPQKHAKTYTIGVKASLKTGFKDKLLGGLELAWSGAFTILNALKGLITGFSLNKLGGPVAMYDMSNQAAQNGLESVLSLMAMLSINLGIFNLIPIPALDGGKILMNIIEAIRRKPIKQETEAYITLAGVAIMVVLMIAVTWNDIMRVFF</sequence>
<proteinExistence type="inferred from homology"/>
<comment type="cofactor">
    <cofactor evidence="3">
        <name>Zn(2+)</name>
        <dbReference type="ChEBI" id="CHEBI:29105"/>
    </cofactor>
</comment>
<comment type="subcellular location">
    <subcellularLocation>
        <location evidence="3">Cell membrane</location>
        <topology evidence="3">Multi-pass membrane protein</topology>
    </subcellularLocation>
</comment>
<comment type="similarity">
    <text evidence="3">Belongs to the peptidase M50B family.</text>
</comment>